<reference key="1">
    <citation type="journal article" date="2006" name="Proc. Natl. Acad. Sci. U.S.A.">
        <title>The complete genome sequence of a chronic atrophic gastritis Helicobacter pylori strain: evolution during disease progression.</title>
        <authorList>
            <person name="Oh J.D."/>
            <person name="Kling-Baeckhed H."/>
            <person name="Giannakis M."/>
            <person name="Xu J."/>
            <person name="Fulton R.S."/>
            <person name="Fulton L.A."/>
            <person name="Cordum H.S."/>
            <person name="Wang C."/>
            <person name="Elliott G."/>
            <person name="Edwards J."/>
            <person name="Mardis E.R."/>
            <person name="Engstrand L.G."/>
            <person name="Gordon J.I."/>
        </authorList>
    </citation>
    <scope>NUCLEOTIDE SEQUENCE [LARGE SCALE GENOMIC DNA]</scope>
    <source>
        <strain>HPAG1</strain>
    </source>
</reference>
<sequence length="130" mass="14036">MNFVFLWAALGGAIGSSLRYFVGKVMPSKFLMFESFPLGTFSVNLIGCFVIGFMGHLAAKKVFGDDFGIFFVTGVLGGFTTFSSYGLDTLKLLQKSQYLEAVSYVLGTNLLGLIGVAIGWFLAKNFVGVN</sequence>
<organism>
    <name type="scientific">Helicobacter pylori (strain HPAG1)</name>
    <dbReference type="NCBI Taxonomy" id="357544"/>
    <lineage>
        <taxon>Bacteria</taxon>
        <taxon>Pseudomonadati</taxon>
        <taxon>Campylobacterota</taxon>
        <taxon>Epsilonproteobacteria</taxon>
        <taxon>Campylobacterales</taxon>
        <taxon>Helicobacteraceae</taxon>
        <taxon>Helicobacter</taxon>
    </lineage>
</organism>
<proteinExistence type="inferred from homology"/>
<keyword id="KW-0997">Cell inner membrane</keyword>
<keyword id="KW-1003">Cell membrane</keyword>
<keyword id="KW-0407">Ion channel</keyword>
<keyword id="KW-0406">Ion transport</keyword>
<keyword id="KW-0472">Membrane</keyword>
<keyword id="KW-0479">Metal-binding</keyword>
<keyword id="KW-0915">Sodium</keyword>
<keyword id="KW-0812">Transmembrane</keyword>
<keyword id="KW-1133">Transmembrane helix</keyword>
<keyword id="KW-0813">Transport</keyword>
<feature type="chain" id="PRO_0000252888" description="Fluoride-specific ion channel FluC">
    <location>
        <begin position="1"/>
        <end position="130"/>
    </location>
</feature>
<feature type="transmembrane region" description="Helical" evidence="1">
    <location>
        <begin position="3"/>
        <end position="23"/>
    </location>
</feature>
<feature type="transmembrane region" description="Helical" evidence="1">
    <location>
        <begin position="38"/>
        <end position="58"/>
    </location>
</feature>
<feature type="transmembrane region" description="Helical" evidence="1">
    <location>
        <begin position="67"/>
        <end position="87"/>
    </location>
</feature>
<feature type="transmembrane region" description="Helical" evidence="1">
    <location>
        <begin position="102"/>
        <end position="122"/>
    </location>
</feature>
<feature type="binding site" evidence="1">
    <location>
        <position position="77"/>
    </location>
    <ligand>
        <name>Na(+)</name>
        <dbReference type="ChEBI" id="CHEBI:29101"/>
        <note>structural</note>
    </ligand>
</feature>
<feature type="binding site" evidence="1">
    <location>
        <position position="80"/>
    </location>
    <ligand>
        <name>Na(+)</name>
        <dbReference type="ChEBI" id="CHEBI:29101"/>
        <note>structural</note>
    </ligand>
</feature>
<dbReference type="EMBL" id="CP000241">
    <property type="protein sequence ID" value="ABF85234.1"/>
    <property type="molecule type" value="Genomic_DNA"/>
</dbReference>
<dbReference type="RefSeq" id="WP_001012010.1">
    <property type="nucleotide sequence ID" value="NC_008086.1"/>
</dbReference>
<dbReference type="SMR" id="Q1CS38"/>
<dbReference type="KEGG" id="hpa:HPAG1_1167"/>
<dbReference type="HOGENOM" id="CLU_114342_2_3_7"/>
<dbReference type="GO" id="GO:0005886">
    <property type="term" value="C:plasma membrane"/>
    <property type="evidence" value="ECO:0007669"/>
    <property type="project" value="UniProtKB-SubCell"/>
</dbReference>
<dbReference type="GO" id="GO:0062054">
    <property type="term" value="F:fluoride channel activity"/>
    <property type="evidence" value="ECO:0007669"/>
    <property type="project" value="UniProtKB-UniRule"/>
</dbReference>
<dbReference type="GO" id="GO:0046872">
    <property type="term" value="F:metal ion binding"/>
    <property type="evidence" value="ECO:0007669"/>
    <property type="project" value="UniProtKB-KW"/>
</dbReference>
<dbReference type="GO" id="GO:0140114">
    <property type="term" value="P:cellular detoxification of fluoride"/>
    <property type="evidence" value="ECO:0007669"/>
    <property type="project" value="UniProtKB-UniRule"/>
</dbReference>
<dbReference type="HAMAP" id="MF_00454">
    <property type="entry name" value="FluC"/>
    <property type="match status" value="1"/>
</dbReference>
<dbReference type="InterPro" id="IPR003691">
    <property type="entry name" value="FluC"/>
</dbReference>
<dbReference type="NCBIfam" id="TIGR00494">
    <property type="entry name" value="crcB"/>
    <property type="match status" value="1"/>
</dbReference>
<dbReference type="PANTHER" id="PTHR28259">
    <property type="entry name" value="FLUORIDE EXPORT PROTEIN 1-RELATED"/>
    <property type="match status" value="1"/>
</dbReference>
<dbReference type="PANTHER" id="PTHR28259:SF18">
    <property type="entry name" value="FLUORIDE-SPECIFIC ION CHANNEL FLUC"/>
    <property type="match status" value="1"/>
</dbReference>
<dbReference type="Pfam" id="PF02537">
    <property type="entry name" value="CRCB"/>
    <property type="match status" value="1"/>
</dbReference>
<gene>
    <name evidence="1" type="primary">fluC</name>
    <name evidence="1" type="synonym">crcB</name>
    <name type="ordered locus">HPAG1_1167</name>
</gene>
<comment type="function">
    <text evidence="1">Fluoride-specific ion channel. Important for reducing fluoride concentration in the cell, thus reducing its toxicity.</text>
</comment>
<comment type="catalytic activity">
    <reaction evidence="1">
        <text>fluoride(in) = fluoride(out)</text>
        <dbReference type="Rhea" id="RHEA:76159"/>
        <dbReference type="ChEBI" id="CHEBI:17051"/>
    </reaction>
    <physiologicalReaction direction="left-to-right" evidence="1">
        <dbReference type="Rhea" id="RHEA:76160"/>
    </physiologicalReaction>
</comment>
<comment type="activity regulation">
    <text evidence="1">Na(+) is not transported, but it plays an essential structural role and its presence is essential for fluoride channel function.</text>
</comment>
<comment type="subcellular location">
    <subcellularLocation>
        <location evidence="1">Cell inner membrane</location>
        <topology evidence="1">Multi-pass membrane protein</topology>
    </subcellularLocation>
</comment>
<comment type="similarity">
    <text evidence="1">Belongs to the fluoride channel Fluc/FEX (TC 1.A.43) family.</text>
</comment>
<protein>
    <recommendedName>
        <fullName evidence="1">Fluoride-specific ion channel FluC</fullName>
    </recommendedName>
</protein>
<accession>Q1CS38</accession>
<evidence type="ECO:0000255" key="1">
    <source>
        <dbReference type="HAMAP-Rule" id="MF_00454"/>
    </source>
</evidence>
<name>FLUC_HELPH</name>